<dbReference type="EMBL" id="AE017285">
    <property type="protein sequence ID" value="AAS95687.1"/>
    <property type="molecule type" value="Genomic_DNA"/>
</dbReference>
<dbReference type="RefSeq" id="WP_010938505.1">
    <property type="nucleotide sequence ID" value="NC_002937.3"/>
</dbReference>
<dbReference type="RefSeq" id="YP_010428.1">
    <property type="nucleotide sequence ID" value="NC_002937.3"/>
</dbReference>
<dbReference type="SMR" id="Q72CS4"/>
<dbReference type="STRING" id="882.DVU_1209"/>
<dbReference type="PaxDb" id="882-DVU_1209"/>
<dbReference type="EnsemblBacteria" id="AAS95687">
    <property type="protein sequence ID" value="AAS95687"/>
    <property type="gene ID" value="DVU_1209"/>
</dbReference>
<dbReference type="KEGG" id="dvu:DVU_1209"/>
<dbReference type="PATRIC" id="fig|882.5.peg.1133"/>
<dbReference type="eggNOG" id="COG0333">
    <property type="taxonomic scope" value="Bacteria"/>
</dbReference>
<dbReference type="HOGENOM" id="CLU_129084_1_3_7"/>
<dbReference type="OrthoDB" id="9801927at2"/>
<dbReference type="PhylomeDB" id="Q72CS4"/>
<dbReference type="Proteomes" id="UP000002194">
    <property type="component" value="Chromosome"/>
</dbReference>
<dbReference type="GO" id="GO:0015934">
    <property type="term" value="C:large ribosomal subunit"/>
    <property type="evidence" value="ECO:0007669"/>
    <property type="project" value="InterPro"/>
</dbReference>
<dbReference type="GO" id="GO:0003735">
    <property type="term" value="F:structural constituent of ribosome"/>
    <property type="evidence" value="ECO:0007669"/>
    <property type="project" value="InterPro"/>
</dbReference>
<dbReference type="GO" id="GO:0006412">
    <property type="term" value="P:translation"/>
    <property type="evidence" value="ECO:0007669"/>
    <property type="project" value="UniProtKB-UniRule"/>
</dbReference>
<dbReference type="HAMAP" id="MF_00340">
    <property type="entry name" value="Ribosomal_bL32"/>
    <property type="match status" value="1"/>
</dbReference>
<dbReference type="InterPro" id="IPR002677">
    <property type="entry name" value="Ribosomal_bL32"/>
</dbReference>
<dbReference type="InterPro" id="IPR044957">
    <property type="entry name" value="Ribosomal_bL32_bact"/>
</dbReference>
<dbReference type="InterPro" id="IPR011332">
    <property type="entry name" value="Ribosomal_zn-bd"/>
</dbReference>
<dbReference type="NCBIfam" id="TIGR01031">
    <property type="entry name" value="rpmF_bact"/>
    <property type="match status" value="1"/>
</dbReference>
<dbReference type="PANTHER" id="PTHR35534">
    <property type="entry name" value="50S RIBOSOMAL PROTEIN L32"/>
    <property type="match status" value="1"/>
</dbReference>
<dbReference type="PANTHER" id="PTHR35534:SF1">
    <property type="entry name" value="LARGE RIBOSOMAL SUBUNIT PROTEIN BL32"/>
    <property type="match status" value="1"/>
</dbReference>
<dbReference type="Pfam" id="PF01783">
    <property type="entry name" value="Ribosomal_L32p"/>
    <property type="match status" value="1"/>
</dbReference>
<dbReference type="SUPFAM" id="SSF57829">
    <property type="entry name" value="Zn-binding ribosomal proteins"/>
    <property type="match status" value="1"/>
</dbReference>
<protein>
    <recommendedName>
        <fullName evidence="1">Large ribosomal subunit protein bL32</fullName>
    </recommendedName>
    <alternativeName>
        <fullName evidence="3">50S ribosomal protein L32</fullName>
    </alternativeName>
</protein>
<comment type="similarity">
    <text evidence="1">Belongs to the bacterial ribosomal protein bL32 family.</text>
</comment>
<evidence type="ECO:0000255" key="1">
    <source>
        <dbReference type="HAMAP-Rule" id="MF_00340"/>
    </source>
</evidence>
<evidence type="ECO:0000256" key="2">
    <source>
        <dbReference type="SAM" id="MobiDB-lite"/>
    </source>
</evidence>
<evidence type="ECO:0000305" key="3"/>
<organism>
    <name type="scientific">Nitratidesulfovibrio vulgaris (strain ATCC 29579 / DSM 644 / CCUG 34227 / NCIMB 8303 / VKM B-1760 / Hildenborough)</name>
    <name type="common">Desulfovibrio vulgaris</name>
    <dbReference type="NCBI Taxonomy" id="882"/>
    <lineage>
        <taxon>Bacteria</taxon>
        <taxon>Pseudomonadati</taxon>
        <taxon>Thermodesulfobacteriota</taxon>
        <taxon>Desulfovibrionia</taxon>
        <taxon>Desulfovibrionales</taxon>
        <taxon>Desulfovibrionaceae</taxon>
        <taxon>Nitratidesulfovibrio</taxon>
    </lineage>
</organism>
<feature type="chain" id="PRO_0000172337" description="Large ribosomal subunit protein bL32">
    <location>
        <begin position="1"/>
        <end position="59"/>
    </location>
</feature>
<feature type="region of interest" description="Disordered" evidence="2">
    <location>
        <begin position="1"/>
        <end position="20"/>
    </location>
</feature>
<feature type="compositionally biased region" description="Basic residues" evidence="2">
    <location>
        <begin position="7"/>
        <end position="19"/>
    </location>
</feature>
<accession>Q72CS4</accession>
<sequence>MAVQQNKKSRSRKGMRRSHDRVAVPAVVYCACGEPTAPHRACPSCGTYKGRQVTKQDNE</sequence>
<keyword id="KW-1185">Reference proteome</keyword>
<keyword id="KW-0687">Ribonucleoprotein</keyword>
<keyword id="KW-0689">Ribosomal protein</keyword>
<name>RL32_NITV2</name>
<reference key="1">
    <citation type="journal article" date="2004" name="Nat. Biotechnol.">
        <title>The genome sequence of the anaerobic, sulfate-reducing bacterium Desulfovibrio vulgaris Hildenborough.</title>
        <authorList>
            <person name="Heidelberg J.F."/>
            <person name="Seshadri R."/>
            <person name="Haveman S.A."/>
            <person name="Hemme C.L."/>
            <person name="Paulsen I.T."/>
            <person name="Kolonay J.F."/>
            <person name="Eisen J.A."/>
            <person name="Ward N.L."/>
            <person name="Methe B.A."/>
            <person name="Brinkac L.M."/>
            <person name="Daugherty S.C."/>
            <person name="DeBoy R.T."/>
            <person name="Dodson R.J."/>
            <person name="Durkin A.S."/>
            <person name="Madupu R."/>
            <person name="Nelson W.C."/>
            <person name="Sullivan S.A."/>
            <person name="Fouts D.E."/>
            <person name="Haft D.H."/>
            <person name="Selengut J."/>
            <person name="Peterson J.D."/>
            <person name="Davidsen T.M."/>
            <person name="Zafar N."/>
            <person name="Zhou L."/>
            <person name="Radune D."/>
            <person name="Dimitrov G."/>
            <person name="Hance M."/>
            <person name="Tran K."/>
            <person name="Khouri H.M."/>
            <person name="Gill J."/>
            <person name="Utterback T.R."/>
            <person name="Feldblyum T.V."/>
            <person name="Wall J.D."/>
            <person name="Voordouw G."/>
            <person name="Fraser C.M."/>
        </authorList>
    </citation>
    <scope>NUCLEOTIDE SEQUENCE [LARGE SCALE GENOMIC DNA]</scope>
    <source>
        <strain>ATCC 29579 / DSM 644 / CCUG 34227 / NCIMB 8303 / VKM B-1760 / Hildenborough</strain>
    </source>
</reference>
<gene>
    <name evidence="1" type="primary">rpmF</name>
    <name type="ordered locus">DVU_1209</name>
</gene>
<proteinExistence type="inferred from homology"/>